<sequence length="271" mass="28596">MTYLQESSRPAVTVPKLQAMRDAGEKIAMLTCYDASFAALLDRAGTDVLLIGDSLGNVLQGHATTLPVSLDDIAYHTACVARAQPRALVVADLPFGTYGTPADAFANAVELMRAGAQMVKLEGGEWLAETIRFLVERSVPVCAHLGLTPQSVHAFGGFKVQGKTEAGAAQLLRDARAIEAAGAQLVVLEAVPTLVASEVTHMLKIPTIGIGAGADCSGQVLVLHDMLGIYPGKRPRFVKDFMQGQPNIEAAVDAYVKAVKDGSFPGPEHSF</sequence>
<protein>
    <recommendedName>
        <fullName evidence="1">3-methyl-2-oxobutanoate hydroxymethyltransferase</fullName>
        <ecNumber evidence="1">2.1.2.11</ecNumber>
    </recommendedName>
    <alternativeName>
        <fullName evidence="1">Ketopantoate hydroxymethyltransferase</fullName>
        <shortName evidence="1">KPHMT</shortName>
    </alternativeName>
</protein>
<comment type="function">
    <text evidence="1">Catalyzes the reversible reaction in which hydroxymethyl group from 5,10-methylenetetrahydrofolate is transferred onto alpha-ketoisovalerate to form ketopantoate.</text>
</comment>
<comment type="catalytic activity">
    <reaction evidence="1">
        <text>3-methyl-2-oxobutanoate + (6R)-5,10-methylene-5,6,7,8-tetrahydrofolate + H2O = 2-dehydropantoate + (6S)-5,6,7,8-tetrahydrofolate</text>
        <dbReference type="Rhea" id="RHEA:11824"/>
        <dbReference type="ChEBI" id="CHEBI:11561"/>
        <dbReference type="ChEBI" id="CHEBI:11851"/>
        <dbReference type="ChEBI" id="CHEBI:15377"/>
        <dbReference type="ChEBI" id="CHEBI:15636"/>
        <dbReference type="ChEBI" id="CHEBI:57453"/>
        <dbReference type="EC" id="2.1.2.11"/>
    </reaction>
</comment>
<comment type="cofactor">
    <cofactor evidence="1">
        <name>Mg(2+)</name>
        <dbReference type="ChEBI" id="CHEBI:18420"/>
    </cofactor>
    <text evidence="1">Binds 1 Mg(2+) ion per subunit.</text>
</comment>
<comment type="pathway">
    <text evidence="1">Cofactor biosynthesis; (R)-pantothenate biosynthesis; (R)-pantoate from 3-methyl-2-oxobutanoate: step 1/2.</text>
</comment>
<comment type="subunit">
    <text evidence="1">Homodecamer; pentamer of dimers.</text>
</comment>
<comment type="subcellular location">
    <subcellularLocation>
        <location evidence="1">Cytoplasm</location>
    </subcellularLocation>
</comment>
<comment type="similarity">
    <text evidence="1">Belongs to the PanB family.</text>
</comment>
<name>PANB_BURM1</name>
<accession>A9AGB5</accession>
<keyword id="KW-0963">Cytoplasm</keyword>
<keyword id="KW-0460">Magnesium</keyword>
<keyword id="KW-0479">Metal-binding</keyword>
<keyword id="KW-0566">Pantothenate biosynthesis</keyword>
<keyword id="KW-1185">Reference proteome</keyword>
<keyword id="KW-0808">Transferase</keyword>
<evidence type="ECO:0000255" key="1">
    <source>
        <dbReference type="HAMAP-Rule" id="MF_00156"/>
    </source>
</evidence>
<dbReference type="EC" id="2.1.2.11" evidence="1"/>
<dbReference type="EMBL" id="CP000868">
    <property type="protein sequence ID" value="ABX16314.1"/>
    <property type="molecule type" value="Genomic_DNA"/>
</dbReference>
<dbReference type="EMBL" id="AP009385">
    <property type="protein sequence ID" value="BAG42572.1"/>
    <property type="molecule type" value="Genomic_DNA"/>
</dbReference>
<dbReference type="RefSeq" id="WP_012214076.1">
    <property type="nucleotide sequence ID" value="NC_010084.1"/>
</dbReference>
<dbReference type="SMR" id="A9AGB5"/>
<dbReference type="STRING" id="395019.BMULJ_00608"/>
<dbReference type="KEGG" id="bmj:BMULJ_00608"/>
<dbReference type="KEGG" id="bmu:Bmul_2630"/>
<dbReference type="eggNOG" id="COG0413">
    <property type="taxonomic scope" value="Bacteria"/>
</dbReference>
<dbReference type="HOGENOM" id="CLU_036645_1_0_4"/>
<dbReference type="UniPathway" id="UPA00028">
    <property type="reaction ID" value="UER00003"/>
</dbReference>
<dbReference type="Proteomes" id="UP000008815">
    <property type="component" value="Chromosome 1"/>
</dbReference>
<dbReference type="GO" id="GO:0005737">
    <property type="term" value="C:cytoplasm"/>
    <property type="evidence" value="ECO:0007669"/>
    <property type="project" value="UniProtKB-SubCell"/>
</dbReference>
<dbReference type="GO" id="GO:0003864">
    <property type="term" value="F:3-methyl-2-oxobutanoate hydroxymethyltransferase activity"/>
    <property type="evidence" value="ECO:0007669"/>
    <property type="project" value="UniProtKB-UniRule"/>
</dbReference>
<dbReference type="GO" id="GO:0000287">
    <property type="term" value="F:magnesium ion binding"/>
    <property type="evidence" value="ECO:0007669"/>
    <property type="project" value="TreeGrafter"/>
</dbReference>
<dbReference type="GO" id="GO:0015940">
    <property type="term" value="P:pantothenate biosynthetic process"/>
    <property type="evidence" value="ECO:0007669"/>
    <property type="project" value="UniProtKB-UniRule"/>
</dbReference>
<dbReference type="CDD" id="cd06557">
    <property type="entry name" value="KPHMT-like"/>
    <property type="match status" value="1"/>
</dbReference>
<dbReference type="FunFam" id="3.20.20.60:FF:000003">
    <property type="entry name" value="3-methyl-2-oxobutanoate hydroxymethyltransferase"/>
    <property type="match status" value="1"/>
</dbReference>
<dbReference type="Gene3D" id="3.20.20.60">
    <property type="entry name" value="Phosphoenolpyruvate-binding domains"/>
    <property type="match status" value="1"/>
</dbReference>
<dbReference type="HAMAP" id="MF_00156">
    <property type="entry name" value="PanB"/>
    <property type="match status" value="1"/>
</dbReference>
<dbReference type="InterPro" id="IPR003700">
    <property type="entry name" value="Pantoate_hydroxy_MeTrfase"/>
</dbReference>
<dbReference type="InterPro" id="IPR015813">
    <property type="entry name" value="Pyrv/PenolPyrv_kinase-like_dom"/>
</dbReference>
<dbReference type="InterPro" id="IPR040442">
    <property type="entry name" value="Pyrv_kinase-like_dom_sf"/>
</dbReference>
<dbReference type="NCBIfam" id="TIGR00222">
    <property type="entry name" value="panB"/>
    <property type="match status" value="1"/>
</dbReference>
<dbReference type="NCBIfam" id="NF001452">
    <property type="entry name" value="PRK00311.1"/>
    <property type="match status" value="1"/>
</dbReference>
<dbReference type="PANTHER" id="PTHR20881">
    <property type="entry name" value="3-METHYL-2-OXOBUTANOATE HYDROXYMETHYLTRANSFERASE"/>
    <property type="match status" value="1"/>
</dbReference>
<dbReference type="PANTHER" id="PTHR20881:SF0">
    <property type="entry name" value="3-METHYL-2-OXOBUTANOATE HYDROXYMETHYLTRANSFERASE"/>
    <property type="match status" value="1"/>
</dbReference>
<dbReference type="Pfam" id="PF02548">
    <property type="entry name" value="Pantoate_transf"/>
    <property type="match status" value="1"/>
</dbReference>
<dbReference type="PIRSF" id="PIRSF000388">
    <property type="entry name" value="Pantoate_hydroxy_MeTrfase"/>
    <property type="match status" value="1"/>
</dbReference>
<dbReference type="SUPFAM" id="SSF51621">
    <property type="entry name" value="Phosphoenolpyruvate/pyruvate domain"/>
    <property type="match status" value="1"/>
</dbReference>
<gene>
    <name evidence="1" type="primary">panB</name>
    <name type="ordered locus">Bmul_2630</name>
    <name type="ordered locus">BMULJ_00608</name>
</gene>
<reference key="1">
    <citation type="submission" date="2007-10" db="EMBL/GenBank/DDBJ databases">
        <title>Complete sequence of chromosome 1 of Burkholderia multivorans ATCC 17616.</title>
        <authorList>
            <person name="Copeland A."/>
            <person name="Lucas S."/>
            <person name="Lapidus A."/>
            <person name="Barry K."/>
            <person name="Glavina del Rio T."/>
            <person name="Dalin E."/>
            <person name="Tice H."/>
            <person name="Pitluck S."/>
            <person name="Chain P."/>
            <person name="Malfatti S."/>
            <person name="Shin M."/>
            <person name="Vergez L."/>
            <person name="Schmutz J."/>
            <person name="Larimer F."/>
            <person name="Land M."/>
            <person name="Hauser L."/>
            <person name="Kyrpides N."/>
            <person name="Kim E."/>
            <person name="Tiedje J."/>
            <person name="Richardson P."/>
        </authorList>
    </citation>
    <scope>NUCLEOTIDE SEQUENCE [LARGE SCALE GENOMIC DNA]</scope>
    <source>
        <strain>ATCC 17616 / 249</strain>
    </source>
</reference>
<reference key="2">
    <citation type="submission" date="2007-04" db="EMBL/GenBank/DDBJ databases">
        <title>Complete genome sequence of Burkholderia multivorans ATCC 17616.</title>
        <authorList>
            <person name="Ohtsubo Y."/>
            <person name="Yamashita A."/>
            <person name="Kurokawa K."/>
            <person name="Takami H."/>
            <person name="Yuhara S."/>
            <person name="Nishiyama E."/>
            <person name="Endo R."/>
            <person name="Miyazaki R."/>
            <person name="Ono A."/>
            <person name="Yano K."/>
            <person name="Ito M."/>
            <person name="Sota M."/>
            <person name="Yuji N."/>
            <person name="Hattori M."/>
            <person name="Tsuda M."/>
        </authorList>
    </citation>
    <scope>NUCLEOTIDE SEQUENCE [LARGE SCALE GENOMIC DNA]</scope>
    <source>
        <strain>ATCC 17616 / 249</strain>
    </source>
</reference>
<proteinExistence type="inferred from homology"/>
<organism>
    <name type="scientific">Burkholderia multivorans (strain ATCC 17616 / 249)</name>
    <dbReference type="NCBI Taxonomy" id="395019"/>
    <lineage>
        <taxon>Bacteria</taxon>
        <taxon>Pseudomonadati</taxon>
        <taxon>Pseudomonadota</taxon>
        <taxon>Betaproteobacteria</taxon>
        <taxon>Burkholderiales</taxon>
        <taxon>Burkholderiaceae</taxon>
        <taxon>Burkholderia</taxon>
        <taxon>Burkholderia cepacia complex</taxon>
    </lineage>
</organism>
<feature type="chain" id="PRO_1000096945" description="3-methyl-2-oxobutanoate hydroxymethyltransferase">
    <location>
        <begin position="1"/>
        <end position="271"/>
    </location>
</feature>
<feature type="active site" description="Proton acceptor" evidence="1">
    <location>
        <position position="189"/>
    </location>
</feature>
<feature type="binding site" evidence="1">
    <location>
        <begin position="53"/>
        <end position="54"/>
    </location>
    <ligand>
        <name>3-methyl-2-oxobutanoate</name>
        <dbReference type="ChEBI" id="CHEBI:11851"/>
    </ligand>
</feature>
<feature type="binding site" evidence="1">
    <location>
        <position position="53"/>
    </location>
    <ligand>
        <name>Mg(2+)</name>
        <dbReference type="ChEBI" id="CHEBI:18420"/>
    </ligand>
</feature>
<feature type="binding site" evidence="1">
    <location>
        <position position="92"/>
    </location>
    <ligand>
        <name>3-methyl-2-oxobutanoate</name>
        <dbReference type="ChEBI" id="CHEBI:11851"/>
    </ligand>
</feature>
<feature type="binding site" evidence="1">
    <location>
        <position position="92"/>
    </location>
    <ligand>
        <name>Mg(2+)</name>
        <dbReference type="ChEBI" id="CHEBI:18420"/>
    </ligand>
</feature>
<feature type="binding site" evidence="1">
    <location>
        <position position="120"/>
    </location>
    <ligand>
        <name>3-methyl-2-oxobutanoate</name>
        <dbReference type="ChEBI" id="CHEBI:11851"/>
    </ligand>
</feature>
<feature type="binding site" evidence="1">
    <location>
        <position position="122"/>
    </location>
    <ligand>
        <name>Mg(2+)</name>
        <dbReference type="ChEBI" id="CHEBI:18420"/>
    </ligand>
</feature>